<name>SUCR1_RAT</name>
<feature type="chain" id="PRO_0000383594" description="Succinate receptor 1">
    <location>
        <begin position="1"/>
        <end position="317"/>
    </location>
</feature>
<feature type="topological domain" description="Extracellular" evidence="3">
    <location>
        <begin position="1"/>
        <end position="27"/>
    </location>
</feature>
<feature type="transmembrane region" description="Helical; Name=1" evidence="3">
    <location>
        <begin position="28"/>
        <end position="48"/>
    </location>
</feature>
<feature type="topological domain" description="Cytoplasmic" evidence="3">
    <location>
        <begin position="49"/>
        <end position="55"/>
    </location>
</feature>
<feature type="transmembrane region" description="Helical; Name=2" evidence="3">
    <location>
        <begin position="56"/>
        <end position="76"/>
    </location>
</feature>
<feature type="topological domain" description="Extracellular" evidence="3">
    <location>
        <begin position="77"/>
        <end position="99"/>
    </location>
</feature>
<feature type="transmembrane region" description="Helical; Name=3" evidence="3">
    <location>
        <begin position="100"/>
        <end position="120"/>
    </location>
</feature>
<feature type="topological domain" description="Cytoplasmic" evidence="3">
    <location>
        <begin position="121"/>
        <end position="133"/>
    </location>
</feature>
<feature type="transmembrane region" description="Helical; Name=4" evidence="3">
    <location>
        <begin position="134"/>
        <end position="154"/>
    </location>
</feature>
<feature type="topological domain" description="Extracellular" evidence="3">
    <location>
        <begin position="155"/>
        <end position="181"/>
    </location>
</feature>
<feature type="transmembrane region" description="Helical; Name=5" evidence="3">
    <location>
        <begin position="182"/>
        <end position="202"/>
    </location>
</feature>
<feature type="topological domain" description="Cytoplasmic" evidence="3">
    <location>
        <begin position="203"/>
        <end position="226"/>
    </location>
</feature>
<feature type="transmembrane region" description="Helical; Name=6" evidence="3">
    <location>
        <begin position="227"/>
        <end position="247"/>
    </location>
</feature>
<feature type="topological domain" description="Extracellular" evidence="3">
    <location>
        <begin position="248"/>
        <end position="276"/>
    </location>
</feature>
<feature type="transmembrane region" description="Helical; Name=7" evidence="3">
    <location>
        <begin position="277"/>
        <end position="297"/>
    </location>
</feature>
<feature type="topological domain" description="Cytoplasmic" evidence="3">
    <location>
        <begin position="298"/>
        <end position="317"/>
    </location>
</feature>
<feature type="glycosylation site" description="N-linked (GlcNAc...) asparagine" evidence="3">
    <location>
        <position position="4"/>
    </location>
</feature>
<feature type="disulfide bond" evidence="4">
    <location>
        <begin position="91"/>
        <end position="168"/>
    </location>
</feature>
<feature type="mutagenesis site" description="Humanized SUCNR1; when associated with N-269." evidence="7">
    <original>K</original>
    <variation>E</variation>
    <location>
        <position position="18"/>
    </location>
</feature>
<feature type="mutagenesis site" description="Humanized SUCNR1; when associated with N-269." evidence="7">
    <original>K</original>
    <variation>N</variation>
    <location>
        <position position="269"/>
    </location>
</feature>
<feature type="helix" evidence="11">
    <location>
        <begin position="8"/>
        <end position="19"/>
    </location>
</feature>
<feature type="helix" evidence="11">
    <location>
        <begin position="21"/>
        <end position="47"/>
    </location>
</feature>
<feature type="helix" evidence="11">
    <location>
        <begin position="53"/>
        <end position="81"/>
    </location>
</feature>
<feature type="helix" evidence="11">
    <location>
        <begin position="88"/>
        <end position="121"/>
    </location>
</feature>
<feature type="helix" evidence="11">
    <location>
        <begin position="128"/>
        <end position="130"/>
    </location>
</feature>
<feature type="helix" evidence="11">
    <location>
        <begin position="132"/>
        <end position="159"/>
    </location>
</feature>
<feature type="helix" evidence="11">
    <location>
        <begin position="162"/>
        <end position="164"/>
    </location>
</feature>
<feature type="turn" evidence="11">
    <location>
        <begin position="171"/>
        <end position="173"/>
    </location>
</feature>
<feature type="helix" evidence="11">
    <location>
        <begin position="177"/>
        <end position="191"/>
    </location>
</feature>
<feature type="helix" evidence="11">
    <location>
        <begin position="193"/>
        <end position="213"/>
    </location>
</feature>
<feature type="helix" evidence="11">
    <location>
        <begin position="225"/>
        <end position="253"/>
    </location>
</feature>
<feature type="helix" evidence="11">
    <location>
        <begin position="263"/>
        <end position="285"/>
    </location>
</feature>
<feature type="helix" evidence="11">
    <location>
        <begin position="286"/>
        <end position="291"/>
    </location>
</feature>
<feature type="strand" evidence="11">
    <location>
        <begin position="292"/>
        <end position="295"/>
    </location>
</feature>
<feature type="helix" evidence="11">
    <location>
        <begin position="297"/>
        <end position="304"/>
    </location>
</feature>
<accession>Q6IYF9</accession>
<comment type="function">
    <text evidence="1 2 5 6">G protein-coupled receptor for succinate able to mediate signaling through Gq/GNAQ or Gi/GNAI second messengers depending on the cell type and the processes regulated (PubMed:15141213). Succinate-SUCNR1 signaling serves as a link between metabolic stress, inflammation and energy homeostasisn (By similarity). In macrophages, plays a range of immune-regulatory roles. During inflammation, succinate-SUCNR1 signaling may act as an anti-inflammatory mediator or boost inflammation depending on the inflammatory status of cells (By similarity). Hyperpolarizes M2 macrophages versus M1 phenotype through Gq signaling by regulating the transcription of genes involved in immune function (By similarity). In activated M1 macrophages, plays a pro-inflammatory role in response to LPS (By similarity). Expressed in dendritic cells, where it is involved in the sensing of immunological danger and enhances immunity. Mediates succinate triggered intracelleular calcium mobilization, induces migratory responses and acts in synergy with Toll-like receptor ligands for the production of proinflammatory cytokines as well as an enhancement of antigen-specific activation of helper T cells (By similarity). In the small intestine, mediates the activation of tuft cells by dietary succinate and triggers type 2 immunity. In adipocytes, plays an important role in the control of energy metabolism. In response to succinate, controls leptin expression in an AMPK-JNK-CEBPA-dependent as well as circadian clock-regulated manner. In muscle tissue, is expressed in non-muscle cells and coordinates muscle remodeling in response to the succinate produced during exercise training in a paracrine manner (By similarity). In retina, acts as a mediator of vessel growth during retinal development. In response to succinate, regulates the production of angiogenic factors, including VEGF, by retinal ganglion neurons (PubMed:18836459).</text>
</comment>
<comment type="subcellular location">
    <subcellularLocation>
        <location evidence="2">Cell membrane</location>
        <topology evidence="2">Multi-pass membrane protein</topology>
    </subcellularLocation>
</comment>
<comment type="tissue specificity">
    <text evidence="6">Expressed in retina.</text>
</comment>
<comment type="similarity">
    <text evidence="4">Belongs to the G-protein coupled receptor 1 family.</text>
</comment>
<protein>
    <recommendedName>
        <fullName>Succinate receptor 1</fullName>
    </recommendedName>
    <alternativeName>
        <fullName>G-protein coupled receptor 91</fullName>
    </alternativeName>
</protein>
<dbReference type="EMBL" id="AY612851">
    <property type="protein sequence ID" value="AAT10590.1"/>
    <property type="molecule type" value="mRNA"/>
</dbReference>
<dbReference type="RefSeq" id="NP_001001518.1">
    <property type="nucleotide sequence ID" value="NM_001001518.2"/>
</dbReference>
<dbReference type="PDB" id="6IBB">
    <property type="method" value="X-ray"/>
    <property type="resolution" value="2.12 A"/>
    <property type="chains" value="A/C=2-317"/>
</dbReference>
<dbReference type="PDB" id="6RNK">
    <property type="method" value="X-ray"/>
    <property type="resolution" value="1.94 A"/>
    <property type="chains" value="A=2-317"/>
</dbReference>
<dbReference type="PDB" id="6Z10">
    <property type="method" value="X-ray"/>
    <property type="resolution" value="2.27 A"/>
    <property type="chains" value="A=2-317"/>
</dbReference>
<dbReference type="PDBsum" id="6IBB"/>
<dbReference type="PDBsum" id="6RNK"/>
<dbReference type="PDBsum" id="6Z10"/>
<dbReference type="SMR" id="Q6IYF9"/>
<dbReference type="FunCoup" id="Q6IYF9">
    <property type="interactions" value="105"/>
</dbReference>
<dbReference type="STRING" id="10116.ENSRNOP00000018767"/>
<dbReference type="BindingDB" id="Q6IYF9"/>
<dbReference type="ChEMBL" id="CHEMBL2150839"/>
<dbReference type="GuidetoPHARMACOLOGY" id="166"/>
<dbReference type="GlyCosmos" id="Q6IYF9">
    <property type="glycosylation" value="1 site, No reported glycans"/>
</dbReference>
<dbReference type="GlyGen" id="Q6IYF9">
    <property type="glycosylation" value="1 site"/>
</dbReference>
<dbReference type="PhosphoSitePlus" id="Q6IYF9"/>
<dbReference type="PaxDb" id="10116-ENSRNOP00000018767"/>
<dbReference type="ABCD" id="Q6IYF9">
    <property type="antibodies" value="1 sequenced antibody"/>
</dbReference>
<dbReference type="Ensembl" id="ENSRNOT00000018767.4">
    <property type="protein sequence ID" value="ENSRNOP00000018767.3"/>
    <property type="gene ID" value="ENSRNOG00000014039.4"/>
</dbReference>
<dbReference type="GeneID" id="408199"/>
<dbReference type="KEGG" id="rno:408199"/>
<dbReference type="UCSC" id="RGD:1303193">
    <property type="organism name" value="rat"/>
</dbReference>
<dbReference type="AGR" id="RGD:1303193"/>
<dbReference type="CTD" id="56670"/>
<dbReference type="RGD" id="1303193">
    <property type="gene designation" value="Sucnr1"/>
</dbReference>
<dbReference type="eggNOG" id="ENOG502QVWP">
    <property type="taxonomic scope" value="Eukaryota"/>
</dbReference>
<dbReference type="GeneTree" id="ENSGT01030000234621"/>
<dbReference type="InParanoid" id="Q6IYF9"/>
<dbReference type="OMA" id="YYKIALF"/>
<dbReference type="OrthoDB" id="49332at9989"/>
<dbReference type="PhylomeDB" id="Q6IYF9"/>
<dbReference type="Reactome" id="R-RNO-373076">
    <property type="pathway name" value="Class A/1 (Rhodopsin-like receptors)"/>
</dbReference>
<dbReference type="Reactome" id="R-RNO-418594">
    <property type="pathway name" value="G alpha (i) signalling events"/>
</dbReference>
<dbReference type="PRO" id="PR:Q6IYF9"/>
<dbReference type="Proteomes" id="UP000002494">
    <property type="component" value="Chromosome 2"/>
</dbReference>
<dbReference type="GO" id="GO:0005886">
    <property type="term" value="C:plasma membrane"/>
    <property type="evidence" value="ECO:0000250"/>
    <property type="project" value="UniProtKB"/>
</dbReference>
<dbReference type="GO" id="GO:0004930">
    <property type="term" value="F:G protein-coupled receptor activity"/>
    <property type="evidence" value="ECO:0000314"/>
    <property type="project" value="UniProtKB"/>
</dbReference>
<dbReference type="GO" id="GO:0038023">
    <property type="term" value="F:signaling receptor activity"/>
    <property type="evidence" value="ECO:0000266"/>
    <property type="project" value="RGD"/>
</dbReference>
<dbReference type="GO" id="GO:0097009">
    <property type="term" value="P:energy homeostasis"/>
    <property type="evidence" value="ECO:0000266"/>
    <property type="project" value="RGD"/>
</dbReference>
<dbReference type="GO" id="GO:0007186">
    <property type="term" value="P:G protein-coupled receptor signaling pathway"/>
    <property type="evidence" value="ECO:0000314"/>
    <property type="project" value="UniProtKB"/>
</dbReference>
<dbReference type="GO" id="GO:0042593">
    <property type="term" value="P:glucose homeostasis"/>
    <property type="evidence" value="ECO:0000266"/>
    <property type="project" value="RGD"/>
</dbReference>
<dbReference type="GO" id="GO:0002281">
    <property type="term" value="P:macrophage activation involved in immune response"/>
    <property type="evidence" value="ECO:0000266"/>
    <property type="project" value="RGD"/>
</dbReference>
<dbReference type="GO" id="GO:0050921">
    <property type="term" value="P:positive regulation of chemotaxis"/>
    <property type="evidence" value="ECO:0000266"/>
    <property type="project" value="RGD"/>
</dbReference>
<dbReference type="GO" id="GO:0050729">
    <property type="term" value="P:positive regulation of inflammatory response"/>
    <property type="evidence" value="ECO:0000266"/>
    <property type="project" value="RGD"/>
</dbReference>
<dbReference type="GO" id="GO:0060177">
    <property type="term" value="P:regulation of angiotensin metabolic process"/>
    <property type="evidence" value="ECO:0000266"/>
    <property type="project" value="RGD"/>
</dbReference>
<dbReference type="GO" id="GO:0002001">
    <property type="term" value="P:renin secretion into blood stream"/>
    <property type="evidence" value="ECO:0000266"/>
    <property type="project" value="RGD"/>
</dbReference>
<dbReference type="GO" id="GO:0051592">
    <property type="term" value="P:response to calcium ion"/>
    <property type="evidence" value="ECO:0000266"/>
    <property type="project" value="RGD"/>
</dbReference>
<dbReference type="FunFam" id="1.20.1070.10:FF:000285">
    <property type="entry name" value="Succinate receptor 1"/>
    <property type="match status" value="1"/>
</dbReference>
<dbReference type="Gene3D" id="1.20.1070.10">
    <property type="entry name" value="Rhodopsin 7-helix transmembrane proteins"/>
    <property type="match status" value="1"/>
</dbReference>
<dbReference type="InterPro" id="IPR000276">
    <property type="entry name" value="GPCR_Rhodpsn"/>
</dbReference>
<dbReference type="InterPro" id="IPR017452">
    <property type="entry name" value="GPCR_Rhodpsn_7TM"/>
</dbReference>
<dbReference type="PANTHER" id="PTHR24231">
    <property type="entry name" value="PURINOCEPTOR-RELATED G-PROTEIN COUPLED RECEPTOR"/>
    <property type="match status" value="1"/>
</dbReference>
<dbReference type="PANTHER" id="PTHR24231:SF14">
    <property type="entry name" value="SUCCINATE RECEPTOR 1"/>
    <property type="match status" value="1"/>
</dbReference>
<dbReference type="Pfam" id="PF00001">
    <property type="entry name" value="7tm_1"/>
    <property type="match status" value="1"/>
</dbReference>
<dbReference type="PRINTS" id="PR00237">
    <property type="entry name" value="GPCRRHODOPSN"/>
</dbReference>
<dbReference type="PRINTS" id="PR01157">
    <property type="entry name" value="P2YPURNOCPTR"/>
</dbReference>
<dbReference type="SUPFAM" id="SSF81321">
    <property type="entry name" value="Family A G protein-coupled receptor-like"/>
    <property type="match status" value="1"/>
</dbReference>
<dbReference type="PROSITE" id="PS00237">
    <property type="entry name" value="G_PROTEIN_RECEP_F1_1"/>
    <property type="match status" value="1"/>
</dbReference>
<dbReference type="PROSITE" id="PS50262">
    <property type="entry name" value="G_PROTEIN_RECEP_F1_2"/>
    <property type="match status" value="1"/>
</dbReference>
<reference key="1">
    <citation type="journal article" date="2004" name="Nature">
        <title>Citric acid cycle intermediates as ligands for orphan G-protein-coupled receptors.</title>
        <authorList>
            <person name="He W."/>
            <person name="Miao F.J.-P."/>
            <person name="Lin D.C.-H."/>
            <person name="Schwandner R.T."/>
            <person name="Wang Z."/>
            <person name="Gao J."/>
            <person name="Chen J.-L."/>
            <person name="Tian H."/>
            <person name="Ling L."/>
        </authorList>
    </citation>
    <scope>NUCLEOTIDE SEQUENCE [MRNA]</scope>
    <scope>FUNCTION</scope>
    <source>
        <strain>Sprague-Dawley</strain>
    </source>
</reference>
<reference key="2">
    <citation type="journal article" date="2008" name="Nat. Med.">
        <title>The succinate receptor GPR91 in neurons has a major role in retinal angiogenesis.</title>
        <authorList>
            <person name="Sapieha P."/>
            <person name="Sirinyan M."/>
            <person name="Hamel D."/>
            <person name="Zaniolo K."/>
            <person name="Joyal J.S."/>
            <person name="Cho J.H."/>
            <person name="Honore J.C."/>
            <person name="Kermorvant-Duchemin E."/>
            <person name="Varma D.R."/>
            <person name="Tremblay S."/>
            <person name="Leduc M."/>
            <person name="Rihakova L."/>
            <person name="Hardy P."/>
            <person name="Klein W.H."/>
            <person name="Mu X."/>
            <person name="Mamer O."/>
            <person name="Lachapelle P."/>
            <person name="Di Polo A."/>
            <person name="Beausejour C."/>
            <person name="Andelfinger G."/>
            <person name="Mitchell G."/>
            <person name="Sennlaub F."/>
            <person name="Chemtob S."/>
        </authorList>
    </citation>
    <scope>FUNCTION IN RETINA</scope>
    <scope>TISSUE SPECIFICITY</scope>
</reference>
<reference evidence="8 9" key="3">
    <citation type="journal article" date="2019" name="Nature">
        <title>Structural basis of species-selective antagonist binding to the succinate receptor.</title>
        <authorList>
            <person name="Haffke M."/>
            <person name="Fehlmann D."/>
            <person name="Rummel G."/>
            <person name="Boivineau J."/>
            <person name="Duckely M."/>
            <person name="Gommermann N."/>
            <person name="Cotesta S."/>
            <person name="Sirockin F."/>
            <person name="Freuler F."/>
            <person name="Littlewood-Evans A."/>
            <person name="Kaupmann K."/>
            <person name="Jaakola V.P."/>
        </authorList>
    </citation>
    <scope>X-RAY CRYSTALLOGRAPHY (1.94 ANGSTROMS) OF 2-317 IN COMPLEX WITH LIGAND</scope>
    <scope>MUTAGENESIS OF LYS-18 AND LYS-269</scope>
</reference>
<reference evidence="10" key="4">
    <citation type="journal article" date="2020" name="J. Med. Chem.">
        <title>Discovery and Optimization of Novel SUCNR1 Inhibitors: Design of Zwitterionic Derivatives with a Salt Bridge for the Improvement of Oral Exposure.</title>
        <authorList>
            <person name="Velcicky J."/>
            <person name="Wilcken R."/>
            <person name="Cotesta S."/>
            <person name="Janser P."/>
            <person name="Schlapbach A."/>
            <person name="Wagner T."/>
            <person name="Piechon P."/>
            <person name="Villard F."/>
            <person name="Bouhelal R."/>
            <person name="Piller F."/>
            <person name="Harlfinger S."/>
            <person name="Stringer R."/>
            <person name="Fehlmann D."/>
            <person name="Kaupmann K."/>
            <person name="Littlewood-Evans A."/>
            <person name="Haffke M."/>
            <person name="Gommermann N."/>
        </authorList>
    </citation>
    <scope>X-RAY CRYSTALLOGRAPHY (2.27 ANGSTROMS) OF 2-317 IN COMPLEX WITH LIGAND</scope>
</reference>
<organism>
    <name type="scientific">Rattus norvegicus</name>
    <name type="common">Rat</name>
    <dbReference type="NCBI Taxonomy" id="10116"/>
    <lineage>
        <taxon>Eukaryota</taxon>
        <taxon>Metazoa</taxon>
        <taxon>Chordata</taxon>
        <taxon>Craniata</taxon>
        <taxon>Vertebrata</taxon>
        <taxon>Euteleostomi</taxon>
        <taxon>Mammalia</taxon>
        <taxon>Eutheria</taxon>
        <taxon>Euarchontoglires</taxon>
        <taxon>Glires</taxon>
        <taxon>Rodentia</taxon>
        <taxon>Myomorpha</taxon>
        <taxon>Muroidea</taxon>
        <taxon>Muridae</taxon>
        <taxon>Murinae</taxon>
        <taxon>Rattus</taxon>
    </lineage>
</organism>
<keyword id="KW-0002">3D-structure</keyword>
<keyword id="KW-1003">Cell membrane</keyword>
<keyword id="KW-1015">Disulfide bond</keyword>
<keyword id="KW-0297">G-protein coupled receptor</keyword>
<keyword id="KW-0325">Glycoprotein</keyword>
<keyword id="KW-0472">Membrane</keyword>
<keyword id="KW-0675">Receptor</keyword>
<keyword id="KW-1185">Reference proteome</keyword>
<keyword id="KW-0807">Transducer</keyword>
<keyword id="KW-0812">Transmembrane</keyword>
<keyword id="KW-1133">Transmembrane helix</keyword>
<evidence type="ECO:0000250" key="1">
    <source>
        <dbReference type="UniProtKB" id="Q99MT6"/>
    </source>
</evidence>
<evidence type="ECO:0000250" key="2">
    <source>
        <dbReference type="UniProtKB" id="Q9BXA5"/>
    </source>
</evidence>
<evidence type="ECO:0000255" key="3"/>
<evidence type="ECO:0000255" key="4">
    <source>
        <dbReference type="PROSITE-ProRule" id="PRU00521"/>
    </source>
</evidence>
<evidence type="ECO:0000269" key="5">
    <source>
    </source>
</evidence>
<evidence type="ECO:0000269" key="6">
    <source>
    </source>
</evidence>
<evidence type="ECO:0000269" key="7">
    <source>
    </source>
</evidence>
<evidence type="ECO:0007744" key="8">
    <source>
        <dbReference type="PDB" id="6IBB"/>
    </source>
</evidence>
<evidence type="ECO:0007744" key="9">
    <source>
        <dbReference type="PDB" id="6RNK"/>
    </source>
</evidence>
<evidence type="ECO:0007744" key="10">
    <source>
        <dbReference type="PDB" id="6Z10"/>
    </source>
</evidence>
<evidence type="ECO:0007829" key="11">
    <source>
        <dbReference type="PDB" id="6RNK"/>
    </source>
</evidence>
<proteinExistence type="evidence at protein level"/>
<gene>
    <name type="primary">Sucnr1</name>
    <name type="synonym">Gpr91</name>
</gene>
<sequence length="317" mass="36679">MAQNLSCENWLALENILKKYYLSAFYGIEFIVGMLGNFTVVFGYLFCMKNWNSSNVYLFNLSISDLAFLCTLPMLIRSYATGNWTYGDVLCISNRYVLHANLYTSILFLTFISIDRYLLMKFPFREHILQKKEFAILISLAVWVLVTLEVLPMLTFITSTPIEKGDSCVDYASSGNPKYSLIYSLCLTLLGFLIPLSVMCFFYYKMVVFLKKRSQQQATVLSLNKPLRLVVLAVVIFSVLFTPYHIMRNVRIASRLDSWPQGCSQKAIKCLYILTRPLAFLNSAVNPIFYFLVGDHFRDMLFSKLRQYFKSLTSFRL</sequence>